<reference key="1">
    <citation type="journal article" date="2004" name="Nature">
        <title>Genome evolution in yeasts.</title>
        <authorList>
            <person name="Dujon B."/>
            <person name="Sherman D."/>
            <person name="Fischer G."/>
            <person name="Durrens P."/>
            <person name="Casaregola S."/>
            <person name="Lafontaine I."/>
            <person name="de Montigny J."/>
            <person name="Marck C."/>
            <person name="Neuveglise C."/>
            <person name="Talla E."/>
            <person name="Goffard N."/>
            <person name="Frangeul L."/>
            <person name="Aigle M."/>
            <person name="Anthouard V."/>
            <person name="Babour A."/>
            <person name="Barbe V."/>
            <person name="Barnay S."/>
            <person name="Blanchin S."/>
            <person name="Beckerich J.-M."/>
            <person name="Beyne E."/>
            <person name="Bleykasten C."/>
            <person name="Boisrame A."/>
            <person name="Boyer J."/>
            <person name="Cattolico L."/>
            <person name="Confanioleri F."/>
            <person name="de Daruvar A."/>
            <person name="Despons L."/>
            <person name="Fabre E."/>
            <person name="Fairhead C."/>
            <person name="Ferry-Dumazet H."/>
            <person name="Groppi A."/>
            <person name="Hantraye F."/>
            <person name="Hennequin C."/>
            <person name="Jauniaux N."/>
            <person name="Joyet P."/>
            <person name="Kachouri R."/>
            <person name="Kerrest A."/>
            <person name="Koszul R."/>
            <person name="Lemaire M."/>
            <person name="Lesur I."/>
            <person name="Ma L."/>
            <person name="Muller H."/>
            <person name="Nicaud J.-M."/>
            <person name="Nikolski M."/>
            <person name="Oztas S."/>
            <person name="Ozier-Kalogeropoulos O."/>
            <person name="Pellenz S."/>
            <person name="Potier S."/>
            <person name="Richard G.-F."/>
            <person name="Straub M.-L."/>
            <person name="Suleau A."/>
            <person name="Swennen D."/>
            <person name="Tekaia F."/>
            <person name="Wesolowski-Louvel M."/>
            <person name="Westhof E."/>
            <person name="Wirth B."/>
            <person name="Zeniou-Meyer M."/>
            <person name="Zivanovic Y."/>
            <person name="Bolotin-Fukuhara M."/>
            <person name="Thierry A."/>
            <person name="Bouchier C."/>
            <person name="Caudron B."/>
            <person name="Scarpelli C."/>
            <person name="Gaillardin C."/>
            <person name="Weissenbach J."/>
            <person name="Wincker P."/>
            <person name="Souciet J.-L."/>
        </authorList>
    </citation>
    <scope>NUCLEOTIDE SEQUENCE [LARGE SCALE GENOMIC DNA]</scope>
    <source>
        <strain>ATCC 36239 / CBS 767 / BCRC 21394 / JCM 1990 / NBRC 0083 / IGC 2968</strain>
    </source>
</reference>
<comment type="function">
    <text evidence="1">Component of the cytosolic iron-sulfur (Fe/S) protein assembly (CIA) machinery. Required for maturation of extramitochondrial Fe-S proteins. The NBP35-CFD1 heterotetramer forms a Fe-S scaffold complex, mediating the de novo assembly of an Fe-S cluster and its transfer to target apoproteins. Required for biogenesis and export of both ribosomal subunits, which may reflect a role in assembly of the Fe/S clusters in RLI1, a protein which performs rRNA processing and ribosome export.</text>
</comment>
<comment type="cofactor">
    <cofactor evidence="1">
        <name>[4Fe-4S] cluster</name>
        <dbReference type="ChEBI" id="CHEBI:49883"/>
    </cofactor>
    <text evidence="1">Binds 4 [4Fe-4S] clusters per heterotetramer. Contains two stable clusters in the N-termini of NBP35 and two labile, bridging clusters between subunits of the NBP35-CFD1 heterotetramer.</text>
</comment>
<comment type="subunit">
    <text evidence="1">Heterotetramer of 2 NBP35 and 2 CFD1 chains.</text>
</comment>
<comment type="subcellular location">
    <subcellularLocation>
        <location evidence="1">Cytoplasm</location>
    </subcellularLocation>
</comment>
<comment type="similarity">
    <text evidence="1">Belongs to the Mrp/NBP35 ATP-binding proteins family. NUBP2/CFD1 subfamily.</text>
</comment>
<accession>Q6BWQ9</accession>
<feature type="chain" id="PRO_0000278878" description="Cytosolic Fe-S cluster assembly factor CFD1">
    <location>
        <begin position="1"/>
        <end position="298"/>
    </location>
</feature>
<feature type="binding site" evidence="1">
    <location>
        <begin position="25"/>
        <end position="32"/>
    </location>
    <ligand>
        <name>ATP</name>
        <dbReference type="ChEBI" id="CHEBI:30616"/>
    </ligand>
</feature>
<feature type="binding site" evidence="1">
    <location>
        <position position="215"/>
    </location>
    <ligand>
        <name>[4Fe-4S] cluster</name>
        <dbReference type="ChEBI" id="CHEBI:49883"/>
        <note>ligand shared between dimeric partners</note>
    </ligand>
</feature>
<feature type="binding site" evidence="1">
    <location>
        <position position="218"/>
    </location>
    <ligand>
        <name>[4Fe-4S] cluster</name>
        <dbReference type="ChEBI" id="CHEBI:49883"/>
        <note>ligand shared between dimeric partners</note>
    </ligand>
</feature>
<dbReference type="EMBL" id="CR382134">
    <property type="protein sequence ID" value="CAG85364.2"/>
    <property type="molecule type" value="Genomic_DNA"/>
</dbReference>
<dbReference type="RefSeq" id="XP_457360.2">
    <property type="nucleotide sequence ID" value="XM_457360.1"/>
</dbReference>
<dbReference type="SMR" id="Q6BWQ9"/>
<dbReference type="FunCoup" id="Q6BWQ9">
    <property type="interactions" value="164"/>
</dbReference>
<dbReference type="STRING" id="284592.Q6BWQ9"/>
<dbReference type="GeneID" id="2913283"/>
<dbReference type="KEGG" id="dha:DEHA2B09416g"/>
<dbReference type="VEuPathDB" id="FungiDB:DEHA2B09416g"/>
<dbReference type="eggNOG" id="KOG3022">
    <property type="taxonomic scope" value="Eukaryota"/>
</dbReference>
<dbReference type="HOGENOM" id="CLU_024839_0_1_1"/>
<dbReference type="InParanoid" id="Q6BWQ9"/>
<dbReference type="OMA" id="WIPVFAD"/>
<dbReference type="OrthoDB" id="3900342at2759"/>
<dbReference type="Proteomes" id="UP000000599">
    <property type="component" value="Chromosome B"/>
</dbReference>
<dbReference type="GO" id="GO:1904564">
    <property type="term" value="C:cytosolic [4Fe-4S] assembly scaffold complex"/>
    <property type="evidence" value="ECO:0007669"/>
    <property type="project" value="EnsemblFungi"/>
</dbReference>
<dbReference type="GO" id="GO:0051539">
    <property type="term" value="F:4 iron, 4 sulfur cluster binding"/>
    <property type="evidence" value="ECO:0007669"/>
    <property type="project" value="UniProtKB-UniRule"/>
</dbReference>
<dbReference type="GO" id="GO:0005524">
    <property type="term" value="F:ATP binding"/>
    <property type="evidence" value="ECO:0007669"/>
    <property type="project" value="UniProtKB-KW"/>
</dbReference>
<dbReference type="GO" id="GO:0016887">
    <property type="term" value="F:ATP hydrolysis activity"/>
    <property type="evidence" value="ECO:0007669"/>
    <property type="project" value="EnsemblFungi"/>
</dbReference>
<dbReference type="GO" id="GO:0140663">
    <property type="term" value="F:ATP-dependent FeS chaperone activity"/>
    <property type="evidence" value="ECO:0007669"/>
    <property type="project" value="InterPro"/>
</dbReference>
<dbReference type="GO" id="GO:0046872">
    <property type="term" value="F:metal ion binding"/>
    <property type="evidence" value="ECO:0007669"/>
    <property type="project" value="UniProtKB-KW"/>
</dbReference>
<dbReference type="GO" id="GO:0016226">
    <property type="term" value="P:iron-sulfur cluster assembly"/>
    <property type="evidence" value="ECO:0007669"/>
    <property type="project" value="UniProtKB-UniRule"/>
</dbReference>
<dbReference type="GO" id="GO:0002098">
    <property type="term" value="P:tRNA wobble uridine modification"/>
    <property type="evidence" value="ECO:0007669"/>
    <property type="project" value="EnsemblFungi"/>
</dbReference>
<dbReference type="CDD" id="cd02037">
    <property type="entry name" value="Mrp_NBP35"/>
    <property type="match status" value="1"/>
</dbReference>
<dbReference type="Gene3D" id="3.40.50.300">
    <property type="entry name" value="P-loop containing nucleotide triphosphate hydrolases"/>
    <property type="match status" value="1"/>
</dbReference>
<dbReference type="HAMAP" id="MF_02040">
    <property type="entry name" value="Mrp_NBP35"/>
    <property type="match status" value="1"/>
</dbReference>
<dbReference type="HAMAP" id="MF_03039">
    <property type="entry name" value="NUBP2"/>
    <property type="match status" value="1"/>
</dbReference>
<dbReference type="InterPro" id="IPR019591">
    <property type="entry name" value="Mrp/NBP35_ATP-bd"/>
</dbReference>
<dbReference type="InterPro" id="IPR028600">
    <property type="entry name" value="NUBP2/Cfd1_eukaryotes"/>
</dbReference>
<dbReference type="InterPro" id="IPR027417">
    <property type="entry name" value="P-loop_NTPase"/>
</dbReference>
<dbReference type="InterPro" id="IPR033756">
    <property type="entry name" value="YlxH/NBP35"/>
</dbReference>
<dbReference type="PANTHER" id="PTHR23264:SF19">
    <property type="entry name" value="CYTOSOLIC FE-S CLUSTER ASSEMBLY FACTOR NUBP2"/>
    <property type="match status" value="1"/>
</dbReference>
<dbReference type="PANTHER" id="PTHR23264">
    <property type="entry name" value="NUCLEOTIDE-BINDING PROTEIN NBP35 YEAST -RELATED"/>
    <property type="match status" value="1"/>
</dbReference>
<dbReference type="Pfam" id="PF10609">
    <property type="entry name" value="ParA"/>
    <property type="match status" value="1"/>
</dbReference>
<dbReference type="SUPFAM" id="SSF52540">
    <property type="entry name" value="P-loop containing nucleoside triphosphate hydrolases"/>
    <property type="match status" value="1"/>
</dbReference>
<sequence>MDTSEPQESPKSLSNVKHIILILSGKGGVGKSSVTTQTALTLVNKGFNTGVLDIDLTGPSLPRMFGVETKQVHQSSAGWVPVSVYNNGQEKNEENKRGNLSLMSLGFLIGNRNSSVVWRGPKKTAMIRQFLKDVVWSGGENNVPLDYLLIDTPPGTSDEHIAIAEELRWANPDGAIIVTTPQQVATADVRKEINFCKKVNFDVLGVVENMSGFICPHCSECTNIFSSGGGKELSEKLDLQFLGNIPIDPSFVEMVEMQDNDQNDGKKKLVDLYDDCELKGIMEGIVDKVLEQQHPARF</sequence>
<name>CFD1_DEBHA</name>
<gene>
    <name evidence="1" type="primary">CFD1</name>
    <name type="ordered locus">DEHA2B09416g</name>
</gene>
<evidence type="ECO:0000255" key="1">
    <source>
        <dbReference type="HAMAP-Rule" id="MF_03039"/>
    </source>
</evidence>
<organism>
    <name type="scientific">Debaryomyces hansenii (strain ATCC 36239 / CBS 767 / BCRC 21394 / JCM 1990 / NBRC 0083 / IGC 2968)</name>
    <name type="common">Yeast</name>
    <name type="synonym">Torulaspora hansenii</name>
    <dbReference type="NCBI Taxonomy" id="284592"/>
    <lineage>
        <taxon>Eukaryota</taxon>
        <taxon>Fungi</taxon>
        <taxon>Dikarya</taxon>
        <taxon>Ascomycota</taxon>
        <taxon>Saccharomycotina</taxon>
        <taxon>Pichiomycetes</taxon>
        <taxon>Debaryomycetaceae</taxon>
        <taxon>Debaryomyces</taxon>
    </lineage>
</organism>
<keyword id="KW-0004">4Fe-4S</keyword>
<keyword id="KW-0067">ATP-binding</keyword>
<keyword id="KW-0963">Cytoplasm</keyword>
<keyword id="KW-0408">Iron</keyword>
<keyword id="KW-0411">Iron-sulfur</keyword>
<keyword id="KW-0479">Metal-binding</keyword>
<keyword id="KW-0547">Nucleotide-binding</keyword>
<keyword id="KW-1185">Reference proteome</keyword>
<proteinExistence type="inferred from homology"/>
<protein>
    <recommendedName>
        <fullName evidence="1">Cytosolic Fe-S cluster assembly factor CFD1</fullName>
    </recommendedName>
    <alternativeName>
        <fullName evidence="1">Cytosolic Fe-S cluster-deficient protein 1</fullName>
    </alternativeName>
</protein>